<sequence length="60" mass="7512">MRRQRRSITDIICENCKYLPTKRSRNKRKPIPKESDVKTFNYTAHLWDIRWLRHRARNTR</sequence>
<protein>
    <recommendedName>
        <fullName>Protein ninE</fullName>
    </recommendedName>
</protein>
<name>NINE_BPP21</name>
<accession>Q9XJQ2</accession>
<gene>
    <name type="primary">ninE</name>
</gene>
<proteinExistence type="inferred from homology"/>
<feature type="chain" id="PRO_0000077615" description="Protein ninE">
    <location>
        <begin position="1"/>
        <end position="60"/>
    </location>
</feature>
<organism>
    <name type="scientific">Enterobacteria phage P21</name>
    <name type="common">Bacteriophage 21</name>
    <name type="synonym">Bacteriophage P21</name>
    <dbReference type="NCBI Taxonomy" id="10711"/>
    <lineage>
        <taxon>Viruses</taxon>
        <taxon>Duplodnaviria</taxon>
        <taxon>Heunggongvirae</taxon>
        <taxon>Uroviricota</taxon>
        <taxon>Caudoviricetes</taxon>
        <taxon>Lambdavirus</taxon>
        <taxon>Lambdavirus lambda</taxon>
    </lineage>
</organism>
<comment type="similarity">
    <text evidence="1">Belongs to the ninE family.</text>
</comment>
<organismHost>
    <name type="scientific">Escherichia coli</name>
    <dbReference type="NCBI Taxonomy" id="562"/>
</organismHost>
<reference key="1">
    <citation type="submission" date="1999-03" db="EMBL/GenBank/DDBJ databases">
        <authorList>
            <person name="Kroeger M."/>
            <person name="Hobom G."/>
        </authorList>
    </citation>
    <scope>NUCLEOTIDE SEQUENCE [GENOMIC DNA]</scope>
</reference>
<evidence type="ECO:0000305" key="1"/>
<dbReference type="EMBL" id="AJ237660">
    <property type="protein sequence ID" value="CAB39989.1"/>
    <property type="molecule type" value="Genomic_DNA"/>
</dbReference>
<dbReference type="InterPro" id="IPR007986">
    <property type="entry name" value="NINE"/>
</dbReference>
<dbReference type="Pfam" id="PF05322">
    <property type="entry name" value="NinE"/>
    <property type="match status" value="1"/>
</dbReference>